<organism>
    <name type="scientific">Bos taurus</name>
    <name type="common">Bovine</name>
    <dbReference type="NCBI Taxonomy" id="9913"/>
    <lineage>
        <taxon>Eukaryota</taxon>
        <taxon>Metazoa</taxon>
        <taxon>Chordata</taxon>
        <taxon>Craniata</taxon>
        <taxon>Vertebrata</taxon>
        <taxon>Euteleostomi</taxon>
        <taxon>Mammalia</taxon>
        <taxon>Eutheria</taxon>
        <taxon>Laurasiatheria</taxon>
        <taxon>Artiodactyla</taxon>
        <taxon>Ruminantia</taxon>
        <taxon>Pecora</taxon>
        <taxon>Bovidae</taxon>
        <taxon>Bovinae</taxon>
        <taxon>Bos</taxon>
    </lineage>
</organism>
<proteinExistence type="evidence at transcript level"/>
<sequence>MSVGPACPQSLLGPEASNSRESSPMPEESYVSLQTSSADTLDTDTVSPLPSSMDLLIQDSPDSSTSPRVKPLSPSVEESTEKEETVPVKKQKIRTVFSQTQLCVLNDRFQRQKYLSLQQMQELSNILNLSYKQVKTWFQNQRMKCKKWQKNNWPRNSNGMPQGPAMAEYPGFYSYHQGCLVNSPGNLPMWGNQTWNNPTWSNQSWNSQSWSNHSWNSQAWCPQAWNNQPWNNQFNNYMEEFLQPGIQLQQNSPVCDLEATLGTAGENYNVIQQTVKYFNSQQQITDLFPNYPLNIQPEDL</sequence>
<name>NANOG_BOVIN</name>
<protein>
    <recommendedName>
        <fullName>Homeobox protein NANOG</fullName>
    </recommendedName>
    <alternativeName>
        <fullName>Homeobox transcription factor Nanog</fullName>
    </alternativeName>
</protein>
<comment type="function">
    <text evidence="1 2 3">Transcription regulator involved in inner cell mass and embryonic stem (ES) cells proliferation and self-renewal. Imposes pluripotency on ES cells and prevents their differentiation towards extraembryonic endoderm and trophectoderm lineages. Blocks bone morphogenetic protein-induced mesoderm differentiation of ES cells by physically interacting with SMAD1 and interfering with the recruitment of coactivators to the active SMAD transcriptional complexes. Acts as a transcriptional activator and repressor. Binds optimally to the DNA consensus sequence 5'-TAAT[GT][GT]-3' or 5'-[CG][GA][CG]C[GC]ATTAN[GC]-3'. Binds to the POU5F1/OCT4 promoter. Able to autorepress its expression in differentiating (ES) cells: binds to its own promoter following interaction with ZNF281/ZFP281, leading to recruitment of the NuRD complex and subsequent repression of expression. When overexpressed, promotes cells to enter into S phase and proliferation (By similarity).</text>
</comment>
<comment type="subunit">
    <text evidence="2 3">Interacts with SMAD1. Interacts with SALL4. Interacts with ZNF281/ZFP281 (By similarity). Interacts with PCGF1 (By similarity). Interacts with ESRRB; reciprocally modulates their transcriptional activities. Interacts with NSD2 (By similarity).</text>
</comment>
<comment type="subcellular location">
    <subcellularLocation>
        <location evidence="4">Nucleus</location>
    </subcellularLocation>
</comment>
<comment type="similarity">
    <text evidence="6">Belongs to the Nanog homeobox family.</text>
</comment>
<gene>
    <name type="primary">NANOG</name>
</gene>
<keyword id="KW-0010">Activator</keyword>
<keyword id="KW-0217">Developmental protein</keyword>
<keyword id="KW-0238">DNA-binding</keyword>
<keyword id="KW-0371">Homeobox</keyword>
<keyword id="KW-0539">Nucleus</keyword>
<keyword id="KW-1185">Reference proteome</keyword>
<keyword id="KW-0677">Repeat</keyword>
<keyword id="KW-0678">Repressor</keyword>
<keyword id="KW-0804">Transcription</keyword>
<keyword id="KW-0805">Transcription regulation</keyword>
<reference key="1">
    <citation type="submission" date="2005-05" db="EMBL/GenBank/DDBJ databases">
        <title>Molecular cloning and characterization of bovine Nanog cDNA and its mRNA expression during preimplantation development of in vitro fertilized and nuclear transfer embryos.</title>
        <authorList>
            <person name="Kocabas A.M."/>
            <person name="Beyhan Z."/>
            <person name="Cibelli J.B."/>
        </authorList>
    </citation>
    <scope>NUCLEOTIDE SEQUENCE [MRNA]</scope>
    <source>
        <tissue>Blastocyst</tissue>
    </source>
</reference>
<accession>Q4JM65</accession>
<feature type="chain" id="PRO_0000261417" description="Homeobox protein NANOG">
    <location>
        <begin position="1"/>
        <end position="300"/>
    </location>
</feature>
<feature type="repeat" description="1">
    <location>
        <begin position="190"/>
        <end position="194"/>
    </location>
</feature>
<feature type="repeat" description="2">
    <location>
        <begin position="195"/>
        <end position="199"/>
    </location>
</feature>
<feature type="repeat" description="3">
    <location>
        <begin position="200"/>
        <end position="204"/>
    </location>
</feature>
<feature type="repeat" description="4">
    <location>
        <begin position="205"/>
        <end position="209"/>
    </location>
</feature>
<feature type="repeat" description="5">
    <location>
        <begin position="210"/>
        <end position="214"/>
    </location>
</feature>
<feature type="repeat" description="6">
    <location>
        <begin position="215"/>
        <end position="219"/>
    </location>
</feature>
<feature type="repeat" description="7">
    <location>
        <begin position="220"/>
        <end position="224"/>
    </location>
</feature>
<feature type="repeat" description="8">
    <location>
        <begin position="225"/>
        <end position="229"/>
    </location>
</feature>
<feature type="repeat" description="9">
    <location>
        <begin position="230"/>
        <end position="234"/>
    </location>
</feature>
<feature type="region of interest" description="Disordered" evidence="5">
    <location>
        <begin position="1"/>
        <end position="86"/>
    </location>
</feature>
<feature type="region of interest" description="Required for DNA-binding" evidence="3">
    <location>
        <begin position="117"/>
        <end position="146"/>
    </location>
</feature>
<feature type="region of interest" description="9 X repeats starting with a Trp in each unit">
    <location>
        <begin position="190"/>
        <end position="234"/>
    </location>
</feature>
<feature type="region of interest" description="Sufficient for transactivation activity" evidence="1">
    <location>
        <begin position="190"/>
        <end position="234"/>
    </location>
</feature>
<feature type="region of interest" description="Sufficient for strong transactivation activity" evidence="1">
    <location>
        <begin position="235"/>
        <end position="300"/>
    </location>
</feature>
<feature type="compositionally biased region" description="Polar residues" evidence="5">
    <location>
        <begin position="31"/>
        <end position="50"/>
    </location>
</feature>
<dbReference type="EMBL" id="DQ069776">
    <property type="protein sequence ID" value="AAY84556.1"/>
    <property type="molecule type" value="mRNA"/>
</dbReference>
<dbReference type="RefSeq" id="NP_001020515.1">
    <property type="nucleotide sequence ID" value="NM_001025344.1"/>
</dbReference>
<dbReference type="SMR" id="Q4JM65"/>
<dbReference type="FunCoup" id="Q4JM65">
    <property type="interactions" value="21"/>
</dbReference>
<dbReference type="STRING" id="9913.ENSBTAP00000027863"/>
<dbReference type="PaxDb" id="9913-ENSBTAP00000027863"/>
<dbReference type="Ensembl" id="ENSBTAT00000027863.4">
    <property type="protein sequence ID" value="ENSBTAP00000027863.3"/>
    <property type="gene ID" value="ENSBTAG00000020916.4"/>
</dbReference>
<dbReference type="GeneID" id="538951"/>
<dbReference type="KEGG" id="bta:538951"/>
<dbReference type="CTD" id="79923"/>
<dbReference type="VEuPathDB" id="HostDB:ENSBTAG00000020916"/>
<dbReference type="eggNOG" id="KOG0491">
    <property type="taxonomic scope" value="Eukaryota"/>
</dbReference>
<dbReference type="GeneTree" id="ENSGT00670000098076"/>
<dbReference type="HOGENOM" id="CLU_086240_0_0_1"/>
<dbReference type="InParanoid" id="Q4JM65"/>
<dbReference type="OMA" id="AWSNHSW"/>
<dbReference type="OrthoDB" id="6159439at2759"/>
<dbReference type="TreeFam" id="TF337402"/>
<dbReference type="Proteomes" id="UP000009136">
    <property type="component" value="Chromosome 5"/>
</dbReference>
<dbReference type="Bgee" id="ENSBTAG00000020916">
    <property type="expression patterns" value="Expressed in conceptus"/>
</dbReference>
<dbReference type="GO" id="GO:0000785">
    <property type="term" value="C:chromatin"/>
    <property type="evidence" value="ECO:0007669"/>
    <property type="project" value="Ensembl"/>
</dbReference>
<dbReference type="GO" id="GO:0005654">
    <property type="term" value="C:nucleoplasm"/>
    <property type="evidence" value="ECO:0007669"/>
    <property type="project" value="Ensembl"/>
</dbReference>
<dbReference type="GO" id="GO:0003682">
    <property type="term" value="F:chromatin binding"/>
    <property type="evidence" value="ECO:0007669"/>
    <property type="project" value="Ensembl"/>
</dbReference>
<dbReference type="GO" id="GO:0001228">
    <property type="term" value="F:DNA-binding transcription activator activity, RNA polymerase II-specific"/>
    <property type="evidence" value="ECO:0007669"/>
    <property type="project" value="Ensembl"/>
</dbReference>
<dbReference type="GO" id="GO:0003700">
    <property type="term" value="F:DNA-binding transcription factor activity"/>
    <property type="evidence" value="ECO:0000250"/>
    <property type="project" value="UniProtKB"/>
</dbReference>
<dbReference type="GO" id="GO:0000981">
    <property type="term" value="F:DNA-binding transcription factor activity, RNA polymerase II-specific"/>
    <property type="evidence" value="ECO:0000318"/>
    <property type="project" value="GO_Central"/>
</dbReference>
<dbReference type="GO" id="GO:0001227">
    <property type="term" value="F:DNA-binding transcription repressor activity, RNA polymerase II-specific"/>
    <property type="evidence" value="ECO:0000250"/>
    <property type="project" value="UniProtKB"/>
</dbReference>
<dbReference type="GO" id="GO:0070577">
    <property type="term" value="F:lysine-acetylated histone binding"/>
    <property type="evidence" value="ECO:0007669"/>
    <property type="project" value="Ensembl"/>
</dbReference>
<dbReference type="GO" id="GO:0000978">
    <property type="term" value="F:RNA polymerase II cis-regulatory region sequence-specific DNA binding"/>
    <property type="evidence" value="ECO:0000318"/>
    <property type="project" value="GO_Central"/>
</dbReference>
<dbReference type="GO" id="GO:0001010">
    <property type="term" value="F:RNA polymerase II sequence-specific DNA-binding transcription factor recruiting activity"/>
    <property type="evidence" value="ECO:0007669"/>
    <property type="project" value="Ensembl"/>
</dbReference>
<dbReference type="GO" id="GO:0000976">
    <property type="term" value="F:transcription cis-regulatory region binding"/>
    <property type="evidence" value="ECO:0000250"/>
    <property type="project" value="UniProtKB"/>
</dbReference>
<dbReference type="GO" id="GO:0030509">
    <property type="term" value="P:BMP signaling pathway"/>
    <property type="evidence" value="ECO:0007669"/>
    <property type="project" value="Ensembl"/>
</dbReference>
<dbReference type="GO" id="GO:0043697">
    <property type="term" value="P:cell dedifferentiation"/>
    <property type="evidence" value="ECO:0007669"/>
    <property type="project" value="Ensembl"/>
</dbReference>
<dbReference type="GO" id="GO:0030154">
    <property type="term" value="P:cell differentiation"/>
    <property type="evidence" value="ECO:0000318"/>
    <property type="project" value="GO_Central"/>
</dbReference>
<dbReference type="GO" id="GO:0009880">
    <property type="term" value="P:embryonic pattern specification"/>
    <property type="evidence" value="ECO:0007669"/>
    <property type="project" value="Ensembl"/>
</dbReference>
<dbReference type="GO" id="GO:0010467">
    <property type="term" value="P:gene expression"/>
    <property type="evidence" value="ECO:0007669"/>
    <property type="project" value="Ensembl"/>
</dbReference>
<dbReference type="GO" id="GO:0008406">
    <property type="term" value="P:gonad development"/>
    <property type="evidence" value="ECO:0007669"/>
    <property type="project" value="Ensembl"/>
</dbReference>
<dbReference type="GO" id="GO:0001710">
    <property type="term" value="P:mesodermal cell fate commitment"/>
    <property type="evidence" value="ECO:0007669"/>
    <property type="project" value="Ensembl"/>
</dbReference>
<dbReference type="GO" id="GO:0030514">
    <property type="term" value="P:negative regulation of BMP signaling pathway"/>
    <property type="evidence" value="ECO:0007669"/>
    <property type="project" value="Ensembl"/>
</dbReference>
<dbReference type="GO" id="GO:0010454">
    <property type="term" value="P:negative regulation of cell fate commitment"/>
    <property type="evidence" value="ECO:0007669"/>
    <property type="project" value="Ensembl"/>
</dbReference>
<dbReference type="GO" id="GO:2000737">
    <property type="term" value="P:negative regulation of stem cell differentiation"/>
    <property type="evidence" value="ECO:0007669"/>
    <property type="project" value="Ensembl"/>
</dbReference>
<dbReference type="GO" id="GO:0008284">
    <property type="term" value="P:positive regulation of cell population proliferation"/>
    <property type="evidence" value="ECO:0007669"/>
    <property type="project" value="Ensembl"/>
</dbReference>
<dbReference type="GO" id="GO:0045931">
    <property type="term" value="P:positive regulation of mitotic cell cycle"/>
    <property type="evidence" value="ECO:0007669"/>
    <property type="project" value="Ensembl"/>
</dbReference>
<dbReference type="GO" id="GO:2000035">
    <property type="term" value="P:regulation of stem cell division"/>
    <property type="evidence" value="ECO:0007669"/>
    <property type="project" value="Ensembl"/>
</dbReference>
<dbReference type="GO" id="GO:0006357">
    <property type="term" value="P:regulation of transcription by RNA polymerase II"/>
    <property type="evidence" value="ECO:0000318"/>
    <property type="project" value="GO_Central"/>
</dbReference>
<dbReference type="GO" id="GO:0032526">
    <property type="term" value="P:response to retinoic acid"/>
    <property type="evidence" value="ECO:0007669"/>
    <property type="project" value="Ensembl"/>
</dbReference>
<dbReference type="GO" id="GO:0035019">
    <property type="term" value="P:somatic stem cell population maintenance"/>
    <property type="evidence" value="ECO:0007669"/>
    <property type="project" value="Ensembl"/>
</dbReference>
<dbReference type="GO" id="GO:0048863">
    <property type="term" value="P:stem cell differentiation"/>
    <property type="evidence" value="ECO:0007669"/>
    <property type="project" value="Ensembl"/>
</dbReference>
<dbReference type="GO" id="GO:0017145">
    <property type="term" value="P:stem cell division"/>
    <property type="evidence" value="ECO:0007669"/>
    <property type="project" value="Ensembl"/>
</dbReference>
<dbReference type="GO" id="GO:0019827">
    <property type="term" value="P:stem cell population maintenance"/>
    <property type="evidence" value="ECO:0000250"/>
    <property type="project" value="UniProtKB"/>
</dbReference>
<dbReference type="CDD" id="cd00086">
    <property type="entry name" value="homeodomain"/>
    <property type="match status" value="1"/>
</dbReference>
<dbReference type="FunFam" id="1.10.10.60:FF:000203">
    <property type="entry name" value="Nanog homeobox transcription factor"/>
    <property type="match status" value="1"/>
</dbReference>
<dbReference type="Gene3D" id="1.10.10.60">
    <property type="entry name" value="Homeodomain-like"/>
    <property type="match status" value="1"/>
</dbReference>
<dbReference type="InterPro" id="IPR050460">
    <property type="entry name" value="Distal-less_Homeobox_TF"/>
</dbReference>
<dbReference type="InterPro" id="IPR001356">
    <property type="entry name" value="HD"/>
</dbReference>
<dbReference type="InterPro" id="IPR017970">
    <property type="entry name" value="Homeobox_CS"/>
</dbReference>
<dbReference type="InterPro" id="IPR009057">
    <property type="entry name" value="Homeodomain-like_sf"/>
</dbReference>
<dbReference type="PANTHER" id="PTHR24327">
    <property type="entry name" value="HOMEOBOX PROTEIN"/>
    <property type="match status" value="1"/>
</dbReference>
<dbReference type="PANTHER" id="PTHR24327:SF72">
    <property type="entry name" value="HOMEOBOX PROTEIN NANOG"/>
    <property type="match status" value="1"/>
</dbReference>
<dbReference type="Pfam" id="PF00046">
    <property type="entry name" value="Homeodomain"/>
    <property type="match status" value="1"/>
</dbReference>
<dbReference type="SMART" id="SM00389">
    <property type="entry name" value="HOX"/>
    <property type="match status" value="1"/>
</dbReference>
<dbReference type="SUPFAM" id="SSF46689">
    <property type="entry name" value="Homeodomain-like"/>
    <property type="match status" value="1"/>
</dbReference>
<dbReference type="PROSITE" id="PS00027">
    <property type="entry name" value="HOMEOBOX_1"/>
    <property type="match status" value="1"/>
</dbReference>
<dbReference type="PROSITE" id="PS50071">
    <property type="entry name" value="HOMEOBOX_2"/>
    <property type="match status" value="1"/>
</dbReference>
<evidence type="ECO:0000250" key="1"/>
<evidence type="ECO:0000250" key="2">
    <source>
        <dbReference type="UniProtKB" id="Q80Z64"/>
    </source>
</evidence>
<evidence type="ECO:0000250" key="3">
    <source>
        <dbReference type="UniProtKB" id="Q9H9S0"/>
    </source>
</evidence>
<evidence type="ECO:0000255" key="4">
    <source>
        <dbReference type="PROSITE-ProRule" id="PRU00108"/>
    </source>
</evidence>
<evidence type="ECO:0000256" key="5">
    <source>
        <dbReference type="SAM" id="MobiDB-lite"/>
    </source>
</evidence>
<evidence type="ECO:0000305" key="6"/>